<protein>
    <recommendedName>
        <fullName>Folate transporter FolT</fullName>
    </recommendedName>
    <alternativeName>
        <fullName>Folate ECF transporter S component FolT</fullName>
    </alternativeName>
</protein>
<feature type="chain" id="PRO_0000409018" description="Folate transporter FolT">
    <location>
        <begin position="1"/>
        <end position="186"/>
    </location>
</feature>
<feature type="transmembrane region" description="Helical" evidence="2">
    <location>
        <begin position="16"/>
        <end position="36"/>
    </location>
</feature>
<feature type="transmembrane region" description="Helical" evidence="2">
    <location>
        <begin position="47"/>
        <end position="67"/>
    </location>
</feature>
<feature type="transmembrane region" description="Helical" evidence="2">
    <location>
        <begin position="81"/>
        <end position="101"/>
    </location>
</feature>
<feature type="transmembrane region" description="Helical" evidence="2">
    <location>
        <begin position="116"/>
        <end position="136"/>
    </location>
</feature>
<feature type="transmembrane region" description="Helical" evidence="2">
    <location>
        <begin position="153"/>
        <end position="173"/>
    </location>
</feature>
<sequence length="186" mass="21046">MNTMFKSPKLSPQRLVTLAMLIALAFAIGKLSIPIIPQQLIISPTFIVNVMIGMIGGPIWAFISLAILDIVDNLSSGAGNFIIWWTLLEAVQGLFYGLFFYQKSLSWTNKKDWLHVTIATAIIMLIGSFIFTPLLVQIYYGVPFWAQFAAGRWLKIFEIPIRILVTMAIMPQLQRIPELRKLANFK</sequence>
<reference key="1">
    <citation type="journal article" date="2002" name="Proc. Natl. Acad. Sci. U.S.A.">
        <title>Genome sequence of Streptococcus mutans UA159, a cariogenic dental pathogen.</title>
        <authorList>
            <person name="Ajdic D.J."/>
            <person name="McShan W.M."/>
            <person name="McLaughlin R.E."/>
            <person name="Savic G."/>
            <person name="Chang J."/>
            <person name="Carson M.B."/>
            <person name="Primeaux C."/>
            <person name="Tian R."/>
            <person name="Kenton S."/>
            <person name="Jia H.G."/>
            <person name="Lin S.P."/>
            <person name="Qian Y."/>
            <person name="Li S."/>
            <person name="Zhu H."/>
            <person name="Najar F.Z."/>
            <person name="Lai H."/>
            <person name="White J."/>
            <person name="Roe B.A."/>
            <person name="Ferretti J.J."/>
        </authorList>
    </citation>
    <scope>NUCLEOTIDE SEQUENCE [LARGE SCALE GENOMIC DNA]</scope>
    <source>
        <strain>ATCC 700610 / UA159</strain>
    </source>
</reference>
<reference key="2">
    <citation type="journal article" date="2008" name="J. Bacteriol.">
        <title>Identification of genes encoding the folate- and thiamine-binding membrane proteins in Firmicutes.</title>
        <authorList>
            <person name="Eudes A."/>
            <person name="Erkens G.B."/>
            <person name="Slotboom D.J."/>
            <person name="Rodionov D.A."/>
            <person name="Naponelli V."/>
            <person name="Hanson A.D."/>
        </authorList>
    </citation>
    <scope>FOLATE-BINDING</scope>
    <source>
        <strain>ATCC 700610 / UA159</strain>
    </source>
</reference>
<organism>
    <name type="scientific">Streptococcus mutans serotype c (strain ATCC 700610 / UA159)</name>
    <dbReference type="NCBI Taxonomy" id="210007"/>
    <lineage>
        <taxon>Bacteria</taxon>
        <taxon>Bacillati</taxon>
        <taxon>Bacillota</taxon>
        <taxon>Bacilli</taxon>
        <taxon>Lactobacillales</taxon>
        <taxon>Streptococcaceae</taxon>
        <taxon>Streptococcus</taxon>
    </lineage>
</organism>
<dbReference type="EMBL" id="AE014133">
    <property type="protein sequence ID" value="AAN58339.1"/>
    <property type="molecule type" value="Genomic_DNA"/>
</dbReference>
<dbReference type="RefSeq" id="NP_721033.1">
    <property type="nucleotide sequence ID" value="NC_004350.2"/>
</dbReference>
<dbReference type="RefSeq" id="WP_002263248.1">
    <property type="nucleotide sequence ID" value="NC_004350.2"/>
</dbReference>
<dbReference type="SMR" id="Q8DV98"/>
<dbReference type="STRING" id="210007.SMU_600c"/>
<dbReference type="KEGG" id="smu:SMU_600c"/>
<dbReference type="PATRIC" id="fig|210007.7.peg.533"/>
<dbReference type="eggNOG" id="ENOG5033E5K">
    <property type="taxonomic scope" value="Bacteria"/>
</dbReference>
<dbReference type="HOGENOM" id="CLU_098232_1_0_9"/>
<dbReference type="OrthoDB" id="2243574at2"/>
<dbReference type="Proteomes" id="UP000002512">
    <property type="component" value="Chromosome"/>
</dbReference>
<dbReference type="GO" id="GO:0005886">
    <property type="term" value="C:plasma membrane"/>
    <property type="evidence" value="ECO:0007669"/>
    <property type="project" value="UniProtKB-SubCell"/>
</dbReference>
<dbReference type="GO" id="GO:0005542">
    <property type="term" value="F:folic acid binding"/>
    <property type="evidence" value="ECO:0007669"/>
    <property type="project" value="UniProtKB-KW"/>
</dbReference>
<dbReference type="Gene3D" id="1.10.1760.20">
    <property type="match status" value="1"/>
</dbReference>
<dbReference type="InterPro" id="IPR030949">
    <property type="entry name" value="ECF_S_folate_fam"/>
</dbReference>
<dbReference type="InterPro" id="IPR009825">
    <property type="entry name" value="ECF_substrate-spec-like"/>
</dbReference>
<dbReference type="NCBIfam" id="TIGR04518">
    <property type="entry name" value="ECF_S_folT_fam"/>
    <property type="match status" value="1"/>
</dbReference>
<dbReference type="Pfam" id="PF07155">
    <property type="entry name" value="ECF-ribofla_trS"/>
    <property type="match status" value="1"/>
</dbReference>
<keyword id="KW-1003">Cell membrane</keyword>
<keyword id="KW-0290">Folate-binding</keyword>
<keyword id="KW-0472">Membrane</keyword>
<keyword id="KW-1185">Reference proteome</keyword>
<keyword id="KW-0812">Transmembrane</keyword>
<keyword id="KW-1133">Transmembrane helix</keyword>
<keyword id="KW-0813">Transport</keyword>
<accession>Q8DV98</accession>
<name>FOLT_STRMU</name>
<gene>
    <name type="primary">folT</name>
    <name type="ordered locus">SMU_600c</name>
</gene>
<evidence type="ECO:0000250" key="1"/>
<evidence type="ECO:0000255" key="2"/>
<evidence type="ECO:0000305" key="3"/>
<proteinExistence type="evidence at protein level"/>
<comment type="function">
    <text evidence="1">Folate-binding protein that interacts with the energy-coupling factor (ECF) ABC-transporter complex. Unlike classic ABC transporters this ECF transporter provides the energy necessary to transport a number of different substrates. The substrates themselves are bound by transmembrane, not extracytoplasmic soluble proteins (By similarity).</text>
</comment>
<comment type="subunit">
    <text evidence="1">Forms a stable energy-coupling factor (ECF) transporter complex composed of a membrane-embedded substrate-binding protein (S component), two ATP-binding proteins (A components) and a transmembrane protein (T component).</text>
</comment>
<comment type="subcellular location">
    <subcellularLocation>
        <location evidence="3">Cell membrane</location>
        <topology evidence="3">Multi-pass membrane protein</topology>
    </subcellularLocation>
</comment>